<feature type="chain" id="PRO_0000236372" description="Thiazole synthase">
    <location>
        <begin position="1"/>
        <end position="266"/>
    </location>
</feature>
<feature type="active site" description="Schiff-base intermediate with DXP" evidence="1">
    <location>
        <position position="110"/>
    </location>
</feature>
<feature type="binding site" evidence="1">
    <location>
        <position position="171"/>
    </location>
    <ligand>
        <name>1-deoxy-D-xylulose 5-phosphate</name>
        <dbReference type="ChEBI" id="CHEBI:57792"/>
    </ligand>
</feature>
<feature type="binding site" evidence="1">
    <location>
        <begin position="197"/>
        <end position="198"/>
    </location>
    <ligand>
        <name>1-deoxy-D-xylulose 5-phosphate</name>
        <dbReference type="ChEBI" id="CHEBI:57792"/>
    </ligand>
</feature>
<feature type="binding site" evidence="1">
    <location>
        <begin position="219"/>
        <end position="220"/>
    </location>
    <ligand>
        <name>1-deoxy-D-xylulose 5-phosphate</name>
        <dbReference type="ChEBI" id="CHEBI:57792"/>
    </ligand>
</feature>
<keyword id="KW-0963">Cytoplasm</keyword>
<keyword id="KW-0704">Schiff base</keyword>
<keyword id="KW-0784">Thiamine biosynthesis</keyword>
<keyword id="KW-0808">Transferase</keyword>
<proteinExistence type="inferred from homology"/>
<evidence type="ECO:0000255" key="1">
    <source>
        <dbReference type="HAMAP-Rule" id="MF_00443"/>
    </source>
</evidence>
<name>THIG_THEFY</name>
<protein>
    <recommendedName>
        <fullName evidence="1">Thiazole synthase</fullName>
        <ecNumber evidence="1">2.8.1.10</ecNumber>
    </recommendedName>
</protein>
<comment type="function">
    <text evidence="1">Catalyzes the rearrangement of 1-deoxy-D-xylulose 5-phosphate (DXP) to produce the thiazole phosphate moiety of thiamine. Sulfur is provided by the thiocarboxylate moiety of the carrier protein ThiS. In vitro, sulfur can be provided by H(2)S.</text>
</comment>
<comment type="catalytic activity">
    <reaction evidence="1">
        <text>[ThiS sulfur-carrier protein]-C-terminal-Gly-aminoethanethioate + 2-iminoacetate + 1-deoxy-D-xylulose 5-phosphate = [ThiS sulfur-carrier protein]-C-terminal Gly-Gly + 2-[(2R,5Z)-2-carboxy-4-methylthiazol-5(2H)-ylidene]ethyl phosphate + 2 H2O + H(+)</text>
        <dbReference type="Rhea" id="RHEA:26297"/>
        <dbReference type="Rhea" id="RHEA-COMP:12909"/>
        <dbReference type="Rhea" id="RHEA-COMP:19908"/>
        <dbReference type="ChEBI" id="CHEBI:15377"/>
        <dbReference type="ChEBI" id="CHEBI:15378"/>
        <dbReference type="ChEBI" id="CHEBI:57792"/>
        <dbReference type="ChEBI" id="CHEBI:62899"/>
        <dbReference type="ChEBI" id="CHEBI:77846"/>
        <dbReference type="ChEBI" id="CHEBI:90778"/>
        <dbReference type="ChEBI" id="CHEBI:232372"/>
        <dbReference type="EC" id="2.8.1.10"/>
    </reaction>
</comment>
<comment type="pathway">
    <text evidence="1">Cofactor biosynthesis; thiamine diphosphate biosynthesis.</text>
</comment>
<comment type="subunit">
    <text evidence="1">Homotetramer. Forms heterodimers with either ThiH or ThiS.</text>
</comment>
<comment type="subcellular location">
    <subcellularLocation>
        <location evidence="1">Cytoplasm</location>
    </subcellularLocation>
</comment>
<comment type="similarity">
    <text evidence="1">Belongs to the ThiG family.</text>
</comment>
<reference key="1">
    <citation type="journal article" date="2007" name="J. Bacteriol.">
        <title>Genome sequence and analysis of the soil cellulolytic actinomycete Thermobifida fusca YX.</title>
        <authorList>
            <person name="Lykidis A."/>
            <person name="Mavromatis K."/>
            <person name="Ivanova N."/>
            <person name="Anderson I."/>
            <person name="Land M."/>
            <person name="DiBartolo G."/>
            <person name="Martinez M."/>
            <person name="Lapidus A."/>
            <person name="Lucas S."/>
            <person name="Copeland A."/>
            <person name="Richardson P."/>
            <person name="Wilson D.B."/>
            <person name="Kyrpides N."/>
        </authorList>
    </citation>
    <scope>NUCLEOTIDE SEQUENCE [LARGE SCALE GENOMIC DNA]</scope>
    <source>
        <strain>YX</strain>
    </source>
</reference>
<dbReference type="EC" id="2.8.1.10" evidence="1"/>
<dbReference type="EMBL" id="CP000088">
    <property type="protein sequence ID" value="AAZ55080.1"/>
    <property type="molecule type" value="Genomic_DNA"/>
</dbReference>
<dbReference type="RefSeq" id="WP_011291489.1">
    <property type="nucleotide sequence ID" value="NC_007333.1"/>
</dbReference>
<dbReference type="SMR" id="Q47R37"/>
<dbReference type="STRING" id="269800.Tfu_1042"/>
<dbReference type="KEGG" id="tfu:Tfu_1042"/>
<dbReference type="eggNOG" id="COG2022">
    <property type="taxonomic scope" value="Bacteria"/>
</dbReference>
<dbReference type="HOGENOM" id="CLU_062233_1_0_11"/>
<dbReference type="OrthoDB" id="9805935at2"/>
<dbReference type="UniPathway" id="UPA00060"/>
<dbReference type="GO" id="GO:0005737">
    <property type="term" value="C:cytoplasm"/>
    <property type="evidence" value="ECO:0007669"/>
    <property type="project" value="UniProtKB-SubCell"/>
</dbReference>
<dbReference type="GO" id="GO:1990107">
    <property type="term" value="F:thiazole synthase activity"/>
    <property type="evidence" value="ECO:0007669"/>
    <property type="project" value="UniProtKB-EC"/>
</dbReference>
<dbReference type="GO" id="GO:0009229">
    <property type="term" value="P:thiamine diphosphate biosynthetic process"/>
    <property type="evidence" value="ECO:0007669"/>
    <property type="project" value="UniProtKB-UniRule"/>
</dbReference>
<dbReference type="CDD" id="cd04728">
    <property type="entry name" value="ThiG"/>
    <property type="match status" value="1"/>
</dbReference>
<dbReference type="Gene3D" id="3.20.20.70">
    <property type="entry name" value="Aldolase class I"/>
    <property type="match status" value="1"/>
</dbReference>
<dbReference type="HAMAP" id="MF_00443">
    <property type="entry name" value="ThiG"/>
    <property type="match status" value="1"/>
</dbReference>
<dbReference type="InterPro" id="IPR013785">
    <property type="entry name" value="Aldolase_TIM"/>
</dbReference>
<dbReference type="InterPro" id="IPR033983">
    <property type="entry name" value="Thiazole_synthase_ThiG"/>
</dbReference>
<dbReference type="InterPro" id="IPR008867">
    <property type="entry name" value="ThiG"/>
</dbReference>
<dbReference type="PANTHER" id="PTHR34266">
    <property type="entry name" value="THIAZOLE SYNTHASE"/>
    <property type="match status" value="1"/>
</dbReference>
<dbReference type="PANTHER" id="PTHR34266:SF2">
    <property type="entry name" value="THIAZOLE SYNTHASE"/>
    <property type="match status" value="1"/>
</dbReference>
<dbReference type="Pfam" id="PF05690">
    <property type="entry name" value="ThiG"/>
    <property type="match status" value="1"/>
</dbReference>
<dbReference type="SUPFAM" id="SSF110399">
    <property type="entry name" value="ThiG-like"/>
    <property type="match status" value="1"/>
</dbReference>
<accession>Q47R37</accession>
<sequence length="266" mass="28129">MTDAATGTTRADTFEDPLVIAGEKFHSRLIMGTGGAPSLHVLADALRASGTEMTTVAMRRVDPNAQGSVWDVLRETGVRPLPNTAGCFTAVDALRTARLGREALETNWVKLEVVADERTLLPDPVETLDAAERLVDEGFVVLAYTNDDPVLARRLAQVGCAAVMPLGAPIGSGMGIRNPHNIELIVEELDVPVILDAGIGTASDAALAMELGCDAVLLATAVTRAQDPVLMAHAMREAVSAGRRARLAGRIPIRRYAHASSPPREG</sequence>
<gene>
    <name evidence="1" type="primary">thiG</name>
    <name type="ordered locus">Tfu_1042</name>
</gene>
<organism>
    <name type="scientific">Thermobifida fusca (strain YX)</name>
    <dbReference type="NCBI Taxonomy" id="269800"/>
    <lineage>
        <taxon>Bacteria</taxon>
        <taxon>Bacillati</taxon>
        <taxon>Actinomycetota</taxon>
        <taxon>Actinomycetes</taxon>
        <taxon>Streptosporangiales</taxon>
        <taxon>Nocardiopsidaceae</taxon>
        <taxon>Thermobifida</taxon>
    </lineage>
</organism>